<proteinExistence type="evidence at transcript level"/>
<evidence type="ECO:0000250" key="1">
    <source>
        <dbReference type="UniProtKB" id="P36531"/>
    </source>
</evidence>
<evidence type="ECO:0000255" key="2"/>
<evidence type="ECO:0000269" key="3">
    <source>
    </source>
</evidence>
<evidence type="ECO:0000305" key="4"/>
<dbReference type="EMBL" id="CU329671">
    <property type="protein sequence ID" value="CCD31368.1"/>
    <property type="molecule type" value="Genomic_DNA"/>
</dbReference>
<dbReference type="RefSeq" id="XP_004001715.1">
    <property type="nucleotide sequence ID" value="XM_004001666.1"/>
</dbReference>
<dbReference type="SMR" id="G2TRQ8"/>
<dbReference type="ComplexPortal" id="CPX-10323">
    <property type="entry name" value="54S mitochondrial large ribosomal subunit"/>
</dbReference>
<dbReference type="STRING" id="284812.G2TRQ8"/>
<dbReference type="PaxDb" id="4896-SPBC1711.18.1"/>
<dbReference type="EnsemblFungi" id="SPBC1711.18.1">
    <property type="protein sequence ID" value="SPBC1711.18.1:pep"/>
    <property type="gene ID" value="SPBC1711.18"/>
</dbReference>
<dbReference type="PomBase" id="SPBC1711.18">
    <property type="gene designation" value="tam9"/>
</dbReference>
<dbReference type="VEuPathDB" id="FungiDB:SPBC1711.18"/>
<dbReference type="HOGENOM" id="CLU_2499159_0_0_1"/>
<dbReference type="InParanoid" id="G2TRQ8"/>
<dbReference type="OMA" id="ITNMPLN"/>
<dbReference type="PRO" id="PR:G2TRQ8"/>
<dbReference type="Proteomes" id="UP000002485">
    <property type="component" value="Chromosome II"/>
</dbReference>
<dbReference type="GO" id="GO:0005762">
    <property type="term" value="C:mitochondrial large ribosomal subunit"/>
    <property type="evidence" value="ECO:0000266"/>
    <property type="project" value="PomBase"/>
</dbReference>
<dbReference type="GO" id="GO:0003735">
    <property type="term" value="F:structural constituent of ribosome"/>
    <property type="evidence" value="ECO:0007669"/>
    <property type="project" value="InterPro"/>
</dbReference>
<dbReference type="GO" id="GO:0032543">
    <property type="term" value="P:mitochondrial translation"/>
    <property type="evidence" value="ECO:0000266"/>
    <property type="project" value="PomBase"/>
</dbReference>
<dbReference type="Gene3D" id="6.20.130.10">
    <property type="match status" value="1"/>
</dbReference>
<dbReference type="InterPro" id="IPR034600">
    <property type="entry name" value="Ribosomal_bL31m"/>
</dbReference>
<dbReference type="PANTHER" id="PTHR28174">
    <property type="entry name" value="54S RIBOSOMAL PROTEIN L36, MITOCHONDRIAL"/>
    <property type="match status" value="1"/>
</dbReference>
<dbReference type="PANTHER" id="PTHR28174:SF1">
    <property type="entry name" value="LARGE RIBOSOMAL SUBUNIT PROTEIN BL31M"/>
    <property type="match status" value="1"/>
</dbReference>
<keyword id="KW-0496">Mitochondrion</keyword>
<keyword id="KW-1185">Reference proteome</keyword>
<keyword id="KW-0687">Ribonucleoprotein</keyword>
<keyword id="KW-0689">Ribosomal protein</keyword>
<keyword id="KW-0809">Transit peptide</keyword>
<comment type="function">
    <text evidence="1">Component of the mitochondrial ribosome (mitoribosome), a dedicated translation machinery responsible for the synthesis of mitochondrial genome-encoded proteins, including at least some of the essential transmembrane subunits of the mitochondrial respiratory chain. The mitoribosomes are attached to the mitochondrial inner membrane and translation products are cotranslationally integrated into the membrane.</text>
</comment>
<comment type="subunit">
    <text evidence="1">Component of the mitochondrial large ribosomal subunit (mt-LSU). Mature yeast 74S mitochondrial ribosomes consist of a small (37S) and a large (54S) subunit. The 37S small subunit contains a 15S ribosomal RNA (15S mt-rRNA) and at least 32 different proteins. The 54S large subunit contains a 21S rRNA (21S mt-rRNA) and at least 45 different proteins.</text>
</comment>
<comment type="subcellular location">
    <subcellularLocation>
        <location evidence="1">Mitochondrion</location>
    </subcellularLocation>
</comment>
<comment type="induction">
    <text evidence="3">Differentially expressed during meiosis.</text>
</comment>
<comment type="similarity">
    <text evidence="4">Belongs to the bacterial ribosomal protein bL31 family. Highly divergent.</text>
</comment>
<gene>
    <name type="primary">tam9</name>
    <name type="ORF">SPBC1711.18</name>
</gene>
<accession>G2TRQ8</accession>
<reference key="1">
    <citation type="journal article" date="2002" name="Nature">
        <title>The genome sequence of Schizosaccharomyces pombe.</title>
        <authorList>
            <person name="Wood V."/>
            <person name="Gwilliam R."/>
            <person name="Rajandream M.A."/>
            <person name="Lyne M.H."/>
            <person name="Lyne R."/>
            <person name="Stewart A."/>
            <person name="Sgouros J.G."/>
            <person name="Peat N."/>
            <person name="Hayles J."/>
            <person name="Baker S.G."/>
            <person name="Basham D."/>
            <person name="Bowman S."/>
            <person name="Brooks K."/>
            <person name="Brown D."/>
            <person name="Brown S."/>
            <person name="Chillingworth T."/>
            <person name="Churcher C.M."/>
            <person name="Collins M."/>
            <person name="Connor R."/>
            <person name="Cronin A."/>
            <person name="Davis P."/>
            <person name="Feltwell T."/>
            <person name="Fraser A."/>
            <person name="Gentles S."/>
            <person name="Goble A."/>
            <person name="Hamlin N."/>
            <person name="Harris D.E."/>
            <person name="Hidalgo J."/>
            <person name="Hodgson G."/>
            <person name="Holroyd S."/>
            <person name="Hornsby T."/>
            <person name="Howarth S."/>
            <person name="Huckle E.J."/>
            <person name="Hunt S."/>
            <person name="Jagels K."/>
            <person name="James K.D."/>
            <person name="Jones L."/>
            <person name="Jones M."/>
            <person name="Leather S."/>
            <person name="McDonald S."/>
            <person name="McLean J."/>
            <person name="Mooney P."/>
            <person name="Moule S."/>
            <person name="Mungall K.L."/>
            <person name="Murphy L.D."/>
            <person name="Niblett D."/>
            <person name="Odell C."/>
            <person name="Oliver K."/>
            <person name="O'Neil S."/>
            <person name="Pearson D."/>
            <person name="Quail M.A."/>
            <person name="Rabbinowitsch E."/>
            <person name="Rutherford K.M."/>
            <person name="Rutter S."/>
            <person name="Saunders D."/>
            <person name="Seeger K."/>
            <person name="Sharp S."/>
            <person name="Skelton J."/>
            <person name="Simmonds M.N."/>
            <person name="Squares R."/>
            <person name="Squares S."/>
            <person name="Stevens K."/>
            <person name="Taylor K."/>
            <person name="Taylor R.G."/>
            <person name="Tivey A."/>
            <person name="Walsh S.V."/>
            <person name="Warren T."/>
            <person name="Whitehead S."/>
            <person name="Woodward J.R."/>
            <person name="Volckaert G."/>
            <person name="Aert R."/>
            <person name="Robben J."/>
            <person name="Grymonprez B."/>
            <person name="Weltjens I."/>
            <person name="Vanstreels E."/>
            <person name="Rieger M."/>
            <person name="Schaefer M."/>
            <person name="Mueller-Auer S."/>
            <person name="Gabel C."/>
            <person name="Fuchs M."/>
            <person name="Duesterhoeft A."/>
            <person name="Fritzc C."/>
            <person name="Holzer E."/>
            <person name="Moestl D."/>
            <person name="Hilbert H."/>
            <person name="Borzym K."/>
            <person name="Langer I."/>
            <person name="Beck A."/>
            <person name="Lehrach H."/>
            <person name="Reinhardt R."/>
            <person name="Pohl T.M."/>
            <person name="Eger P."/>
            <person name="Zimmermann W."/>
            <person name="Wedler H."/>
            <person name="Wambutt R."/>
            <person name="Purnelle B."/>
            <person name="Goffeau A."/>
            <person name="Cadieu E."/>
            <person name="Dreano S."/>
            <person name="Gloux S."/>
            <person name="Lelaure V."/>
            <person name="Mottier S."/>
            <person name="Galibert F."/>
            <person name="Aves S.J."/>
            <person name="Xiang Z."/>
            <person name="Hunt C."/>
            <person name="Moore K."/>
            <person name="Hurst S.M."/>
            <person name="Lucas M."/>
            <person name="Rochet M."/>
            <person name="Gaillardin C."/>
            <person name="Tallada V.A."/>
            <person name="Garzon A."/>
            <person name="Thode G."/>
            <person name="Daga R.R."/>
            <person name="Cruzado L."/>
            <person name="Jimenez J."/>
            <person name="Sanchez M."/>
            <person name="del Rey F."/>
            <person name="Benito J."/>
            <person name="Dominguez A."/>
            <person name="Revuelta J.L."/>
            <person name="Moreno S."/>
            <person name="Armstrong J."/>
            <person name="Forsburg S.L."/>
            <person name="Cerutti L."/>
            <person name="Lowe T."/>
            <person name="McCombie W.R."/>
            <person name="Paulsen I."/>
            <person name="Potashkin J."/>
            <person name="Shpakovski G.V."/>
            <person name="Ussery D."/>
            <person name="Barrell B.G."/>
            <person name="Nurse P."/>
        </authorList>
    </citation>
    <scope>NUCLEOTIDE SEQUENCE [LARGE SCALE GENOMIC DNA]</scope>
    <source>
        <strain>972 / ATCC 24843</strain>
    </source>
</reference>
<reference key="2">
    <citation type="journal article" date="2011" name="Science">
        <title>Comparative functional genomics of the fission yeasts.</title>
        <authorList>
            <person name="Rhind N."/>
            <person name="Chen Z."/>
            <person name="Yassour M."/>
            <person name="Thompson D.A."/>
            <person name="Haas B.J."/>
            <person name="Habib N."/>
            <person name="Wapinski I."/>
            <person name="Roy S."/>
            <person name="Lin M.F."/>
            <person name="Heiman D.I."/>
            <person name="Young S.K."/>
            <person name="Furuya K."/>
            <person name="Guo Y."/>
            <person name="Pidoux A."/>
            <person name="Chen H.M."/>
            <person name="Robbertse B."/>
            <person name="Goldberg J.M."/>
            <person name="Aoki K."/>
            <person name="Bayne E.H."/>
            <person name="Berlin A.M."/>
            <person name="Desjardins C.A."/>
            <person name="Dobbs E."/>
            <person name="Dukaj L."/>
            <person name="Fan L."/>
            <person name="FitzGerald M.G."/>
            <person name="French C."/>
            <person name="Gujja S."/>
            <person name="Hansen K."/>
            <person name="Keifenheim D."/>
            <person name="Levin J.Z."/>
            <person name="Mosher R.A."/>
            <person name="Mueller C.A."/>
            <person name="Pfiffner J."/>
            <person name="Priest M."/>
            <person name="Russ C."/>
            <person name="Smialowska A."/>
            <person name="Swoboda P."/>
            <person name="Sykes S.M."/>
            <person name="Vaughn M."/>
            <person name="Vengrova S."/>
            <person name="Yoder R."/>
            <person name="Zeng Q."/>
            <person name="Allshire R."/>
            <person name="Baulcombe D."/>
            <person name="Birren B.W."/>
            <person name="Brown W."/>
            <person name="Ekwall K."/>
            <person name="Kellis M."/>
            <person name="Leatherwood J."/>
            <person name="Levin H."/>
            <person name="Margalit H."/>
            <person name="Martienssen R."/>
            <person name="Nieduszynski C.A."/>
            <person name="Spatafora J.W."/>
            <person name="Friedman N."/>
            <person name="Dalgaard J.Z."/>
            <person name="Baumann P."/>
            <person name="Niki H."/>
            <person name="Regev A."/>
            <person name="Nusbaum C."/>
        </authorList>
    </citation>
    <scope>IDENTIFICATION</scope>
</reference>
<reference key="3">
    <citation type="journal article" date="2011" name="Genetics">
        <title>Augmented annotation of the Schizosaccharomyces pombe genome reveals additional genes required for growth and viability.</title>
        <authorList>
            <person name="Bitton D.A."/>
            <person name="Wood V."/>
            <person name="Scutt P.J."/>
            <person name="Grallert A."/>
            <person name="Yates T."/>
            <person name="Smith D.L."/>
            <person name="Hagan I.M."/>
            <person name="Miller C.J."/>
        </authorList>
    </citation>
    <scope>IDENTIFICATION</scope>
    <scope>INDUCTION</scope>
</reference>
<name>RM36_SCHPO</name>
<organism>
    <name type="scientific">Schizosaccharomyces pombe (strain 972 / ATCC 24843)</name>
    <name type="common">Fission yeast</name>
    <dbReference type="NCBI Taxonomy" id="284812"/>
    <lineage>
        <taxon>Eukaryota</taxon>
        <taxon>Fungi</taxon>
        <taxon>Dikarya</taxon>
        <taxon>Ascomycota</taxon>
        <taxon>Taphrinomycotina</taxon>
        <taxon>Schizosaccharomycetes</taxon>
        <taxon>Schizosaccharomycetales</taxon>
        <taxon>Schizosaccharomycetaceae</taxon>
        <taxon>Schizosaccharomyces</taxon>
    </lineage>
</organism>
<feature type="transit peptide" description="Mitochondrion" evidence="2">
    <location>
        <begin position="1"/>
        <end position="18"/>
    </location>
</feature>
<feature type="chain" id="PRO_0000416518" description="Large ribosomal subunit protein bL31m">
    <location>
        <begin position="19"/>
        <end position="86"/>
    </location>
</feature>
<sequence>MKCSLRLFEKAGRLSVRSQTVQTFQQRIVLANGASYLVNTTLPKPYILSIKDITNMPLNNPKVNALSSIRGQESRRSKFEERYEGL</sequence>
<protein>
    <recommendedName>
        <fullName evidence="4">Large ribosomal subunit protein bL31m</fullName>
    </recommendedName>
    <alternativeName>
        <fullName>54S ribosomal protein L36, mitochondrial</fullName>
    </alternativeName>
    <alternativeName>
        <fullName>Transcripts altered in meiosis protein 9</fullName>
    </alternativeName>
</protein>